<evidence type="ECO:0000250" key="1"/>
<evidence type="ECO:0000250" key="2">
    <source>
        <dbReference type="UniProtKB" id="P16422"/>
    </source>
</evidence>
<evidence type="ECO:0000255" key="3"/>
<evidence type="ECO:0000255" key="4">
    <source>
        <dbReference type="PROSITE-ProRule" id="PRU00500"/>
    </source>
</evidence>
<evidence type="ECO:0000305" key="5"/>
<accession>Q3T0L5</accession>
<accession>Q1JP89</accession>
<keyword id="KW-0965">Cell junction</keyword>
<keyword id="KW-1003">Cell membrane</keyword>
<keyword id="KW-1015">Disulfide bond</keyword>
<keyword id="KW-0325">Glycoprotein</keyword>
<keyword id="KW-0472">Membrane</keyword>
<keyword id="KW-1185">Reference proteome</keyword>
<keyword id="KW-0677">Repeat</keyword>
<keyword id="KW-0732">Signal</keyword>
<keyword id="KW-0796">Tight junction</keyword>
<keyword id="KW-0812">Transmembrane</keyword>
<keyword id="KW-1133">Transmembrane helix</keyword>
<protein>
    <recommendedName>
        <fullName>Epithelial cell adhesion molecule</fullName>
        <shortName>Ep-CAM</shortName>
    </recommendedName>
    <alternativeName>
        <fullName>Tumor-associated calcium signal transducer 1</fullName>
    </alternativeName>
    <cdAntigenName>CD326</cdAntigenName>
</protein>
<sequence length="314" mass="34859">MAPPQVLAFGLLVAAATAAVAADQEGCVCENYKLTTNCSVNALGQCQCTSVGTQHSVICTKLATKCLVMKAEMNHSKSGRRGKPEGAIQNNDGLYDPECDDKGLFKAKQCNGTSTCWCVNTAGVRRTDKDSEISCSEPVRTYWIIIELKHKTREKPYDLQSLQSALKDVITNRYQLDPKYITNILYENDVITIDLVQNSSQKTQNDVDIADVAYYFEKDVKDESLFHSKRMDLRVNGELLDLDPGRTSIYYVDEKPPEFSMQGLQAGIIAVIVVVVVAIIAGIIVLVVSRKKSMTKYEKAEIKEMGEMHRELNA</sequence>
<dbReference type="EMBL" id="BC102346">
    <property type="protein sequence ID" value="AAI02347.1"/>
    <property type="molecule type" value="mRNA"/>
</dbReference>
<dbReference type="EMBL" id="BT025464">
    <property type="protein sequence ID" value="ABF57420.1"/>
    <property type="molecule type" value="mRNA"/>
</dbReference>
<dbReference type="RefSeq" id="NP_001030367.1">
    <property type="nucleotide sequence ID" value="NM_001035290.1"/>
</dbReference>
<dbReference type="SMR" id="Q3T0L5"/>
<dbReference type="FunCoup" id="Q3T0L5">
    <property type="interactions" value="132"/>
</dbReference>
<dbReference type="STRING" id="9913.ENSBTAP00000008487"/>
<dbReference type="GlyCosmos" id="Q3T0L5">
    <property type="glycosylation" value="4 sites, No reported glycans"/>
</dbReference>
<dbReference type="GlyGen" id="Q3T0L5">
    <property type="glycosylation" value="4 sites"/>
</dbReference>
<dbReference type="PaxDb" id="9913-ENSBTAP00000008487"/>
<dbReference type="PeptideAtlas" id="Q3T0L5"/>
<dbReference type="GeneID" id="514039"/>
<dbReference type="KEGG" id="bta:514039"/>
<dbReference type="CTD" id="4072"/>
<dbReference type="eggNOG" id="ENOG502QVSU">
    <property type="taxonomic scope" value="Eukaryota"/>
</dbReference>
<dbReference type="InParanoid" id="Q3T0L5"/>
<dbReference type="OrthoDB" id="8953056at2759"/>
<dbReference type="Proteomes" id="UP000009136">
    <property type="component" value="Unplaced"/>
</dbReference>
<dbReference type="GO" id="GO:0005923">
    <property type="term" value="C:bicellular tight junction"/>
    <property type="evidence" value="ECO:0000250"/>
    <property type="project" value="UniProtKB"/>
</dbReference>
<dbReference type="GO" id="GO:0016328">
    <property type="term" value="C:lateral plasma membrane"/>
    <property type="evidence" value="ECO:0000250"/>
    <property type="project" value="UniProtKB"/>
</dbReference>
<dbReference type="GO" id="GO:0005886">
    <property type="term" value="C:plasma membrane"/>
    <property type="evidence" value="ECO:0000250"/>
    <property type="project" value="UniProtKB"/>
</dbReference>
<dbReference type="GO" id="GO:0098641">
    <property type="term" value="F:cadherin binding involved in cell-cell adhesion"/>
    <property type="evidence" value="ECO:0000318"/>
    <property type="project" value="GO_Central"/>
</dbReference>
<dbReference type="GO" id="GO:0008284">
    <property type="term" value="P:positive regulation of cell population proliferation"/>
    <property type="evidence" value="ECO:0000250"/>
    <property type="project" value="UniProtKB"/>
</dbReference>
<dbReference type="CDD" id="cd00191">
    <property type="entry name" value="TY"/>
    <property type="match status" value="1"/>
</dbReference>
<dbReference type="FunFam" id="4.10.800.10:FF:000015">
    <property type="entry name" value="Epithelial cell adhesion molecule"/>
    <property type="match status" value="1"/>
</dbReference>
<dbReference type="Gene3D" id="4.10.800.10">
    <property type="entry name" value="Thyroglobulin type-1"/>
    <property type="match status" value="1"/>
</dbReference>
<dbReference type="InterPro" id="IPR049420">
    <property type="entry name" value="EPCAM-Trop-2_C"/>
</dbReference>
<dbReference type="InterPro" id="IPR043406">
    <property type="entry name" value="EPCAM/Trop-2"/>
</dbReference>
<dbReference type="InterPro" id="IPR041630">
    <property type="entry name" value="EpCAM_N"/>
</dbReference>
<dbReference type="InterPro" id="IPR000716">
    <property type="entry name" value="Thyroglobulin_1"/>
</dbReference>
<dbReference type="InterPro" id="IPR036857">
    <property type="entry name" value="Thyroglobulin_1_sf"/>
</dbReference>
<dbReference type="PANTHER" id="PTHR14168:SF2">
    <property type="entry name" value="EPITHELIAL CELL ADHESION MOLECULE"/>
    <property type="match status" value="1"/>
</dbReference>
<dbReference type="PANTHER" id="PTHR14168">
    <property type="entry name" value="TUMOR-ASSOCIATED CALCIUM SIGNAL TRANSDUCER"/>
    <property type="match status" value="1"/>
</dbReference>
<dbReference type="Pfam" id="PF21283">
    <property type="entry name" value="EPCAM-Trop-2_C"/>
    <property type="match status" value="1"/>
</dbReference>
<dbReference type="Pfam" id="PF18635">
    <property type="entry name" value="EpCAM_N"/>
    <property type="match status" value="1"/>
</dbReference>
<dbReference type="Pfam" id="PF00086">
    <property type="entry name" value="Thyroglobulin_1"/>
    <property type="match status" value="1"/>
</dbReference>
<dbReference type="SMART" id="SM00211">
    <property type="entry name" value="TY"/>
    <property type="match status" value="1"/>
</dbReference>
<dbReference type="SUPFAM" id="SSF57610">
    <property type="entry name" value="Thyroglobulin type-1 domain"/>
    <property type="match status" value="1"/>
</dbReference>
<dbReference type="PROSITE" id="PS00484">
    <property type="entry name" value="THYROGLOBULIN_1_1"/>
    <property type="match status" value="1"/>
</dbReference>
<dbReference type="PROSITE" id="PS51162">
    <property type="entry name" value="THYROGLOBULIN_1_2"/>
    <property type="match status" value="1"/>
</dbReference>
<name>EPCAM_BOVIN</name>
<comment type="function">
    <text evidence="1">May act as a physical homophilic interaction molecule between intestinal epithelial cells (IECs) and intraepithelial lymphocytes (IELs) at the mucosal epithelium for providing immunological barrier as a first line of defense against mucosal infection. Plays a role in embryonic stem cells proliferation and differentiation. Up-regulates the expression of FABP5, MYC and cyclins A and E (By similarity).</text>
</comment>
<comment type="subunit">
    <text evidence="1">Monomer. Interacts with phosphorylated CLDN7 (By similarity).</text>
</comment>
<comment type="subcellular location">
    <subcellularLocation>
        <location evidence="2">Lateral cell membrane</location>
        <topology evidence="2">Single-pass type I membrane protein</topology>
    </subcellularLocation>
    <subcellularLocation>
        <location evidence="2">Cell junction</location>
        <location evidence="2">Tight junction</location>
    </subcellularLocation>
    <text evidence="2">Colocalizes with CLDN7 at the lateral cell membrane and tight junction.</text>
</comment>
<comment type="PTM">
    <text evidence="1">Glycosylation at Asn-198 is crucial for protein stability.</text>
</comment>
<comment type="similarity">
    <text evidence="5">Belongs to the EPCAM family.</text>
</comment>
<proteinExistence type="evidence at transcript level"/>
<gene>
    <name type="primary">EPCAM</name>
    <name type="synonym">TACSTD1</name>
</gene>
<reference key="1">
    <citation type="journal article" date="2005" name="BMC Genomics">
        <title>Characterization of 954 bovine full-CDS cDNA sequences.</title>
        <authorList>
            <person name="Harhay G.P."/>
            <person name="Sonstegard T.S."/>
            <person name="Keele J.W."/>
            <person name="Heaton M.P."/>
            <person name="Clawson M.L."/>
            <person name="Snelling W.M."/>
            <person name="Wiedmann R.T."/>
            <person name="Van Tassell C.P."/>
            <person name="Smith T.P.L."/>
        </authorList>
    </citation>
    <scope>NUCLEOTIDE SEQUENCE [LARGE SCALE MRNA]</scope>
</reference>
<reference key="2">
    <citation type="submission" date="2005-08" db="EMBL/GenBank/DDBJ databases">
        <authorList>
            <consortium name="NIH - Mammalian Gene Collection (MGC) project"/>
        </authorList>
    </citation>
    <scope>NUCLEOTIDE SEQUENCE [LARGE SCALE MRNA]</scope>
    <source>
        <strain>Crossbred X Angus</strain>
        <tissue>Ileum</tissue>
    </source>
</reference>
<feature type="signal peptide" evidence="3">
    <location>
        <begin position="1"/>
        <end position="23"/>
    </location>
</feature>
<feature type="chain" id="PRO_0000380181" description="Epithelial cell adhesion molecule">
    <location>
        <begin position="24"/>
        <end position="314"/>
    </location>
</feature>
<feature type="topological domain" description="Extracellular" evidence="3">
    <location>
        <begin position="24"/>
        <end position="265"/>
    </location>
</feature>
<feature type="transmembrane region" description="Helical" evidence="3">
    <location>
        <begin position="266"/>
        <end position="288"/>
    </location>
</feature>
<feature type="topological domain" description="Cytoplasmic" evidence="3">
    <location>
        <begin position="289"/>
        <end position="314"/>
    </location>
</feature>
<feature type="domain" description="Thyroglobulin type-1" evidence="4">
    <location>
        <begin position="63"/>
        <end position="135"/>
    </location>
</feature>
<feature type="glycosylation site" description="N-linked (GlcNAc...) asparagine" evidence="3">
    <location>
        <position position="37"/>
    </location>
</feature>
<feature type="glycosylation site" description="N-linked (GlcNAc...) asparagine" evidence="3">
    <location>
        <position position="74"/>
    </location>
</feature>
<feature type="glycosylation site" description="N-linked (GlcNAc...) asparagine" evidence="3">
    <location>
        <position position="111"/>
    </location>
</feature>
<feature type="glycosylation site" description="N-linked (GlcNAc...) asparagine" evidence="3">
    <location>
        <position position="198"/>
    </location>
</feature>
<feature type="disulfide bond" evidence="4">
    <location>
        <begin position="27"/>
        <end position="46"/>
    </location>
</feature>
<feature type="disulfide bond" evidence="4">
    <location>
        <begin position="29"/>
        <end position="59"/>
    </location>
</feature>
<feature type="disulfide bond" evidence="4">
    <location>
        <begin position="38"/>
        <end position="48"/>
    </location>
</feature>
<feature type="disulfide bond" evidence="4">
    <location>
        <begin position="66"/>
        <end position="99"/>
    </location>
</feature>
<feature type="disulfide bond" evidence="4">
    <location>
        <begin position="110"/>
        <end position="116"/>
    </location>
</feature>
<feature type="disulfide bond" evidence="4">
    <location>
        <begin position="118"/>
        <end position="135"/>
    </location>
</feature>
<feature type="sequence conflict" description="In Ref. 1; ABF57420." evidence="5" ref="1">
    <original>Q</original>
    <variation>H</variation>
    <location>
        <position position="201"/>
    </location>
</feature>
<organism>
    <name type="scientific">Bos taurus</name>
    <name type="common">Bovine</name>
    <dbReference type="NCBI Taxonomy" id="9913"/>
    <lineage>
        <taxon>Eukaryota</taxon>
        <taxon>Metazoa</taxon>
        <taxon>Chordata</taxon>
        <taxon>Craniata</taxon>
        <taxon>Vertebrata</taxon>
        <taxon>Euteleostomi</taxon>
        <taxon>Mammalia</taxon>
        <taxon>Eutheria</taxon>
        <taxon>Laurasiatheria</taxon>
        <taxon>Artiodactyla</taxon>
        <taxon>Ruminantia</taxon>
        <taxon>Pecora</taxon>
        <taxon>Bovidae</taxon>
        <taxon>Bovinae</taxon>
        <taxon>Bos</taxon>
    </lineage>
</organism>